<keyword id="KW-0343">GTPase activation</keyword>
<keyword id="KW-0479">Metal-binding</keyword>
<keyword id="KW-1185">Reference proteome</keyword>
<keyword id="KW-0749">Sporulation</keyword>
<keyword id="KW-0862">Zinc</keyword>
<keyword id="KW-0863">Zinc-finger</keyword>
<evidence type="ECO:0000255" key="1">
    <source>
        <dbReference type="PROSITE-ProRule" id="PRU00288"/>
    </source>
</evidence>
<evidence type="ECO:0000305" key="2"/>
<name>SPS18_YEAST</name>
<accession>P32572</accession>
<accession>D6W0Y5</accession>
<feature type="chain" id="PRO_0000074227" description="Sporulation protein SPS18">
    <location>
        <begin position="1"/>
        <end position="300"/>
    </location>
</feature>
<feature type="domain" description="Arf-GAP" evidence="1">
    <location>
        <begin position="11"/>
        <end position="130"/>
    </location>
</feature>
<feature type="zinc finger region" description="C4-type" evidence="1">
    <location>
        <begin position="28"/>
        <end position="51"/>
    </location>
</feature>
<feature type="sequence conflict" description="In Ref. 5; AAA62404." evidence="2" ref="5">
    <original>R</original>
    <variation>P</variation>
    <location>
        <position position="106"/>
    </location>
</feature>
<feature type="sequence conflict" description="In Ref. 5; AAA62404." evidence="2" ref="5">
    <original>R</original>
    <variation>Q</variation>
    <location>
        <position position="132"/>
    </location>
</feature>
<feature type="sequence conflict" description="In Ref. 5; AAA62404." evidence="2" ref="5">
    <original>D</original>
    <variation>N</variation>
    <location>
        <position position="201"/>
    </location>
</feature>
<feature type="sequence conflict" description="In Ref. 5; AAA62404." evidence="2" ref="5">
    <original>Q</original>
    <variation>V</variation>
    <location>
        <position position="230"/>
    </location>
</feature>
<gene>
    <name type="primary">SPS18</name>
    <name type="synonym">SPX18</name>
    <name type="ordered locus">YNL204C</name>
    <name type="ORF">N1354</name>
</gene>
<organism>
    <name type="scientific">Saccharomyces cerevisiae (strain ATCC 204508 / S288c)</name>
    <name type="common">Baker's yeast</name>
    <dbReference type="NCBI Taxonomy" id="559292"/>
    <lineage>
        <taxon>Eukaryota</taxon>
        <taxon>Fungi</taxon>
        <taxon>Dikarya</taxon>
        <taxon>Ascomycota</taxon>
        <taxon>Saccharomycotina</taxon>
        <taxon>Saccharomycetes</taxon>
        <taxon>Saccharomycetales</taxon>
        <taxon>Saccharomycetaceae</taxon>
        <taxon>Saccharomyces</taxon>
    </lineage>
</organism>
<proteinExistence type="evidence at transcript level"/>
<comment type="developmental stage">
    <text>Sequentially activated during the process of meiosis and spore formation.</text>
</comment>
<comment type="caution">
    <text evidence="2">It is uncertain whether Met-1 or Met-10 is the initiator.</text>
</comment>
<sequence length="300" mass="34240">MRLFENSKDMENRKRLLRAKKAAGNNNCFECKSVNPQFVSCSFGIFICVNCANLLRGMGTNIFCVKSITMDNFEEKDVRRVEKSGNNRFGSFLSKNGILQNGIPLREKYDNLFAKSYKRRLANEVRSNDINRNMYLGFNNFQQYTNGATSQIRDRTLREISNNSNASEGAEFVLPEKVLGSDNFQDCERFPACLSSERNLDENNVTSATSTLTIEKFQNDPIGTISRSWQLLSDALYKSYEDFKGSVVQPTIENIQQRNLPNDIKRSFVHFNEKLHETPHLPSPVFSCFTGGDILPPEFN</sequence>
<protein>
    <recommendedName>
        <fullName>Sporulation protein SPS18</fullName>
    </recommendedName>
    <alternativeName>
        <fullName>Sporulation-specific protein SPX18</fullName>
    </alternativeName>
</protein>
<reference key="1">
    <citation type="journal article" date="1994" name="Yeast">
        <title>A 21.7 kb DNA segment on the left arm of yeast chromosome XIV carries WHI3, GCR2, SPX18, SPX19, an homologue to the heat shock gene SSB1 and 8 new open reading frames of unknown function.</title>
        <authorList>
            <person name="Jonniaux J.-L."/>
            <person name="Coster F."/>
            <person name="Purnelle B."/>
            <person name="Goffeau A."/>
        </authorList>
    </citation>
    <scope>NUCLEOTIDE SEQUENCE [GENOMIC DNA]</scope>
    <source>
        <strain>ATCC 96604 / S288c / FY1679</strain>
    </source>
</reference>
<reference key="2">
    <citation type="journal article" date="1997" name="Nature">
        <title>The nucleotide sequence of Saccharomyces cerevisiae chromosome XIV and its evolutionary implications.</title>
        <authorList>
            <person name="Philippsen P."/>
            <person name="Kleine K."/>
            <person name="Poehlmann R."/>
            <person name="Duesterhoeft A."/>
            <person name="Hamberg K."/>
            <person name="Hegemann J.H."/>
            <person name="Obermaier B."/>
            <person name="Urrestarazu L.A."/>
            <person name="Aert R."/>
            <person name="Albermann K."/>
            <person name="Altmann R."/>
            <person name="Andre B."/>
            <person name="Baladron V."/>
            <person name="Ballesta J.P.G."/>
            <person name="Becam A.-M."/>
            <person name="Beinhauer J.D."/>
            <person name="Boskovic J."/>
            <person name="Buitrago M.J."/>
            <person name="Bussereau F."/>
            <person name="Coster F."/>
            <person name="Crouzet M."/>
            <person name="D'Angelo M."/>
            <person name="Dal Pero F."/>
            <person name="De Antoni A."/>
            <person name="del Rey F."/>
            <person name="Doignon F."/>
            <person name="Domdey H."/>
            <person name="Dubois E."/>
            <person name="Fiedler T.A."/>
            <person name="Fleig U."/>
            <person name="Floeth M."/>
            <person name="Fritz C."/>
            <person name="Gaillardin C."/>
            <person name="Garcia-Cantalejo J.M."/>
            <person name="Glansdorff N."/>
            <person name="Goffeau A."/>
            <person name="Gueldener U."/>
            <person name="Herbert C.J."/>
            <person name="Heumann K."/>
            <person name="Heuss-Neitzel D."/>
            <person name="Hilbert H."/>
            <person name="Hinni K."/>
            <person name="Iraqui Houssaini I."/>
            <person name="Jacquet M."/>
            <person name="Jimenez A."/>
            <person name="Jonniaux J.-L."/>
            <person name="Karpfinger-Hartl L."/>
            <person name="Lanfranchi G."/>
            <person name="Lepingle A."/>
            <person name="Levesque H."/>
            <person name="Lyck R."/>
            <person name="Maftahi M."/>
            <person name="Mallet L."/>
            <person name="Maurer C.T.C."/>
            <person name="Messenguy F."/>
            <person name="Mewes H.-W."/>
            <person name="Moestl D."/>
            <person name="Nasr F."/>
            <person name="Nicaud J.-M."/>
            <person name="Niedenthal R.K."/>
            <person name="Pandolfo D."/>
            <person name="Pierard A."/>
            <person name="Piravandi E."/>
            <person name="Planta R.J."/>
            <person name="Pohl T.M."/>
            <person name="Purnelle B."/>
            <person name="Rebischung C."/>
            <person name="Remacha M.A."/>
            <person name="Revuelta J.L."/>
            <person name="Rinke M."/>
            <person name="Saiz J.E."/>
            <person name="Sartorello F."/>
            <person name="Scherens B."/>
            <person name="Sen-Gupta M."/>
            <person name="Soler-Mira A."/>
            <person name="Urbanus J.H.M."/>
            <person name="Valle G."/>
            <person name="Van Dyck L."/>
            <person name="Verhasselt P."/>
            <person name="Vierendeels F."/>
            <person name="Vissers S."/>
            <person name="Voet M."/>
            <person name="Volckaert G."/>
            <person name="Wach A."/>
            <person name="Wambutt R."/>
            <person name="Wedler H."/>
            <person name="Zollner A."/>
            <person name="Hani J."/>
        </authorList>
    </citation>
    <scope>NUCLEOTIDE SEQUENCE [LARGE SCALE GENOMIC DNA]</scope>
    <source>
        <strain>ATCC 204508 / S288c</strain>
    </source>
</reference>
<reference key="3">
    <citation type="journal article" date="2014" name="G3 (Bethesda)">
        <title>The reference genome sequence of Saccharomyces cerevisiae: Then and now.</title>
        <authorList>
            <person name="Engel S.R."/>
            <person name="Dietrich F.S."/>
            <person name="Fisk D.G."/>
            <person name="Binkley G."/>
            <person name="Balakrishnan R."/>
            <person name="Costanzo M.C."/>
            <person name="Dwight S.S."/>
            <person name="Hitz B.C."/>
            <person name="Karra K."/>
            <person name="Nash R.S."/>
            <person name="Weng S."/>
            <person name="Wong E.D."/>
            <person name="Lloyd P."/>
            <person name="Skrzypek M.S."/>
            <person name="Miyasato S.R."/>
            <person name="Simison M."/>
            <person name="Cherry J.M."/>
        </authorList>
    </citation>
    <scope>GENOME REANNOTATION</scope>
    <source>
        <strain>ATCC 204508 / S288c</strain>
    </source>
</reference>
<reference key="4">
    <citation type="journal article" date="2007" name="Genome Res.">
        <title>Approaching a complete repository of sequence-verified protein-encoding clones for Saccharomyces cerevisiae.</title>
        <authorList>
            <person name="Hu Y."/>
            <person name="Rolfs A."/>
            <person name="Bhullar B."/>
            <person name="Murthy T.V.S."/>
            <person name="Zhu C."/>
            <person name="Berger M.F."/>
            <person name="Camargo A.A."/>
            <person name="Kelley F."/>
            <person name="McCarron S."/>
            <person name="Jepson D."/>
            <person name="Richardson A."/>
            <person name="Raphael J."/>
            <person name="Moreira D."/>
            <person name="Taycher E."/>
            <person name="Zuo D."/>
            <person name="Mohr S."/>
            <person name="Kane M.F."/>
            <person name="Williamson J."/>
            <person name="Simpson A.J.G."/>
            <person name="Bulyk M.L."/>
            <person name="Harlow E."/>
            <person name="Marsischky G."/>
            <person name="Kolodner R.D."/>
            <person name="LaBaer J."/>
        </authorList>
    </citation>
    <scope>NUCLEOTIDE SEQUENCE [GENOMIC DNA]</scope>
    <source>
        <strain>ATCC 204508 / S288c</strain>
    </source>
</reference>
<reference key="5">
    <citation type="journal article" date="1994" name="Mol. Gen. Genet.">
        <title>Identification of a sporulation-specific promoter regulating divergent transcription of two novel sporulation genes in Saccharomyces cerevisiae.</title>
        <authorList>
            <person name="Coe J.G."/>
            <person name="Murray L.E."/>
            <person name="Dawes I.W."/>
        </authorList>
    </citation>
    <scope>NUCLEOTIDE SEQUENCE [GENOMIC DNA] OF 1-266</scope>
    <source>
        <strain>ATCC 28684 / S14</strain>
    </source>
</reference>
<dbReference type="EMBL" id="X78898">
    <property type="protein sequence ID" value="CAA55504.1"/>
    <property type="molecule type" value="Genomic_DNA"/>
</dbReference>
<dbReference type="EMBL" id="Z71482">
    <property type="protein sequence ID" value="CAA96108.1"/>
    <property type="molecule type" value="Genomic_DNA"/>
</dbReference>
<dbReference type="EMBL" id="AY693126">
    <property type="protein sequence ID" value="AAT93145.1"/>
    <property type="molecule type" value="Genomic_DNA"/>
</dbReference>
<dbReference type="EMBL" id="M90351">
    <property type="protein sequence ID" value="AAA62404.1"/>
    <property type="molecule type" value="Genomic_DNA"/>
</dbReference>
<dbReference type="EMBL" id="BK006947">
    <property type="protein sequence ID" value="DAA10351.1"/>
    <property type="molecule type" value="Genomic_DNA"/>
</dbReference>
<dbReference type="PIR" id="S50727">
    <property type="entry name" value="S50727"/>
</dbReference>
<dbReference type="RefSeq" id="NP_014195.1">
    <property type="nucleotide sequence ID" value="NM_001183042.1"/>
</dbReference>
<dbReference type="SMR" id="P32572"/>
<dbReference type="BioGRID" id="35631">
    <property type="interactions" value="39"/>
</dbReference>
<dbReference type="DIP" id="DIP-2859N"/>
<dbReference type="FunCoup" id="P32572">
    <property type="interactions" value="72"/>
</dbReference>
<dbReference type="IntAct" id="P32572">
    <property type="interactions" value="5"/>
</dbReference>
<dbReference type="MINT" id="P32572"/>
<dbReference type="STRING" id="4932.YNL204C"/>
<dbReference type="PaxDb" id="4932-YNL204C"/>
<dbReference type="PeptideAtlas" id="P32572"/>
<dbReference type="EnsemblFungi" id="YNL204C_mRNA">
    <property type="protein sequence ID" value="YNL204C"/>
    <property type="gene ID" value="YNL204C"/>
</dbReference>
<dbReference type="GeneID" id="855517"/>
<dbReference type="KEGG" id="sce:YNL204C"/>
<dbReference type="AGR" id="SGD:S000005148"/>
<dbReference type="SGD" id="S000005148">
    <property type="gene designation" value="SPS18"/>
</dbReference>
<dbReference type="VEuPathDB" id="FungiDB:YNL204C"/>
<dbReference type="eggNOG" id="KOG0704">
    <property type="taxonomic scope" value="Eukaryota"/>
</dbReference>
<dbReference type="HOGENOM" id="CLU_070893_0_0_1"/>
<dbReference type="InParanoid" id="P32572"/>
<dbReference type="OMA" id="CVNCANL"/>
<dbReference type="OrthoDB" id="983479at2759"/>
<dbReference type="BioCyc" id="YEAST:G3O-33211-MONOMER"/>
<dbReference type="Reactome" id="R-SCE-6807878">
    <property type="pathway name" value="COPI-mediated anterograde transport"/>
</dbReference>
<dbReference type="Reactome" id="R-SCE-6811434">
    <property type="pathway name" value="COPI-dependent Golgi-to-ER retrograde traffic"/>
</dbReference>
<dbReference type="BioGRID-ORCS" id="855517">
    <property type="hits" value="1 hit in 10 CRISPR screens"/>
</dbReference>
<dbReference type="PRO" id="PR:P32572"/>
<dbReference type="Proteomes" id="UP000002311">
    <property type="component" value="Chromosome XIV"/>
</dbReference>
<dbReference type="RNAct" id="P32572">
    <property type="molecule type" value="protein"/>
</dbReference>
<dbReference type="GO" id="GO:0000139">
    <property type="term" value="C:Golgi membrane"/>
    <property type="evidence" value="ECO:0000318"/>
    <property type="project" value="GO_Central"/>
</dbReference>
<dbReference type="GO" id="GO:0005096">
    <property type="term" value="F:GTPase activator activity"/>
    <property type="evidence" value="ECO:0000318"/>
    <property type="project" value="GO_Central"/>
</dbReference>
<dbReference type="GO" id="GO:0008270">
    <property type="term" value="F:zinc ion binding"/>
    <property type="evidence" value="ECO:0007669"/>
    <property type="project" value="UniProtKB-KW"/>
</dbReference>
<dbReference type="GO" id="GO:0030437">
    <property type="term" value="P:ascospore formation"/>
    <property type="evidence" value="ECO:0000315"/>
    <property type="project" value="SGD"/>
</dbReference>
<dbReference type="GO" id="GO:0032012">
    <property type="term" value="P:regulation of ARF protein signal transduction"/>
    <property type="evidence" value="ECO:0000318"/>
    <property type="project" value="GO_Central"/>
</dbReference>
<dbReference type="GO" id="GO:0030100">
    <property type="term" value="P:regulation of endocytosis"/>
    <property type="evidence" value="ECO:0000318"/>
    <property type="project" value="GO_Central"/>
</dbReference>
<dbReference type="Gene3D" id="1.10.220.150">
    <property type="entry name" value="Arf GTPase activating protein"/>
    <property type="match status" value="1"/>
</dbReference>
<dbReference type="InterPro" id="IPR037278">
    <property type="entry name" value="ARFGAP/RecO"/>
</dbReference>
<dbReference type="InterPro" id="IPR001164">
    <property type="entry name" value="ArfGAP_dom"/>
</dbReference>
<dbReference type="InterPro" id="IPR038508">
    <property type="entry name" value="ArfGAP_dom_sf"/>
</dbReference>
<dbReference type="PANTHER" id="PTHR46395">
    <property type="entry name" value="ADP-RIBOSYLATION FACTOR GTPASE-ACTIVATING PROTEIN 1"/>
    <property type="match status" value="1"/>
</dbReference>
<dbReference type="PANTHER" id="PTHR46395:SF1">
    <property type="entry name" value="ADP-RIBOSYLATION FACTOR GTPASE-ACTIVATING PROTEIN 1"/>
    <property type="match status" value="1"/>
</dbReference>
<dbReference type="Pfam" id="PF01412">
    <property type="entry name" value="ArfGap"/>
    <property type="match status" value="1"/>
</dbReference>
<dbReference type="PRINTS" id="PR00405">
    <property type="entry name" value="REVINTRACTNG"/>
</dbReference>
<dbReference type="SMART" id="SM00105">
    <property type="entry name" value="ArfGap"/>
    <property type="match status" value="1"/>
</dbReference>
<dbReference type="SUPFAM" id="SSF57863">
    <property type="entry name" value="ArfGap/RecO-like zinc finger"/>
    <property type="match status" value="1"/>
</dbReference>
<dbReference type="PROSITE" id="PS50115">
    <property type="entry name" value="ARFGAP"/>
    <property type="match status" value="1"/>
</dbReference>